<gene>
    <name type="primary">ponA</name>
</gene>
<feature type="chain" id="PRO_0000083181" description="Penicillin-binding protein 1A">
    <location>
        <begin position="1"/>
        <end position="637" status="greater than"/>
    </location>
</feature>
<feature type="region of interest" description="Transglycosylase" evidence="2">
    <location>
        <begin position="62"/>
        <end position="224"/>
    </location>
</feature>
<feature type="region of interest" description="Transpeptidase" evidence="2">
    <location>
        <begin position="298"/>
        <end position="612"/>
    </location>
</feature>
<feature type="active site" description="Proton donor; for transglycosylase activity" evidence="2">
    <location>
        <position position="91"/>
    </location>
</feature>
<feature type="active site" description="Acyl-ester intermediate; for transpeptidase activity" evidence="2">
    <location>
        <position position="371"/>
    </location>
</feature>
<feature type="non-terminal residue">
    <location>
        <position position="637"/>
    </location>
</feature>
<evidence type="ECO:0000250" key="1">
    <source>
        <dbReference type="UniProtKB" id="P02918"/>
    </source>
</evidence>
<evidence type="ECO:0000250" key="2">
    <source>
        <dbReference type="UniProtKB" id="P02919"/>
    </source>
</evidence>
<evidence type="ECO:0000305" key="3"/>
<sequence>MNKQTILRIAKYISICFLTVFIAAIMLGGGLFLYYVSNAPALSESKLVATTSSKIYDNNDELIADLGSERRVNAQANEIPTDLVNAIVSIEDHRFFNHRGIDTIRILGATLRNLRGGGGLQGASTLTQQLIKLTYFSTSTSDQTLSRKAQEAWLAVQLEQKATKQEILTYYINKVYMSNGNYGMQTAAQSYYGKDLKDLSIPQLALLAGMPQAPNQYDPYSHPEAAQERRNLVLSEMKGQGYITAEQYEKAINTPITDGLQSLKSANSYPPYMDNYLKEVIDQVEQETGYNLLTTGMEVYTNVDSKVQQRLWDIYNTDEYVNYPDDELQVASTIVDVTDGKVIAQLGARHQSSNVSFGINQAVETNRDWGSTMKPITDYAPALEYGVYDSTASIVHDSPYNYPGTSTPVYNWDKSYFGNITLQYALQQSRNVPAVETLEKVGLDRAKTFLNGLGIDYPSIHYANAISSNTTESDKKYGASSEKMAAAYAAFANGGIYPKPMYINKIVFSDGSSKEFSDSGTRAMKETTAYMMTDMMKTVLAYGTGRGAYLPWLPQAGKTGTSNYTDDEIENYIKNTGYVAPDEMFVGYTRKYSMAVWTGYSNRLTPIVGDGFYVAAKVYRSMMTYLSEDDHPGDWTM</sequence>
<accession>Q00573</accession>
<protein>
    <recommendedName>
        <fullName>Penicillin-binding protein 1A</fullName>
        <shortName>PBP-1A</shortName>
    </recommendedName>
    <domain>
        <recommendedName>
            <fullName>Penicillin-insensitive transglycosylase</fullName>
            <ecNumber evidence="1">2.4.99.28</ecNumber>
        </recommendedName>
        <alternativeName>
            <fullName>Peptidoglycan TGase</fullName>
        </alternativeName>
    </domain>
    <domain>
        <recommendedName>
            <fullName>Penicillin-sensitive transpeptidase</fullName>
            <ecNumber evidence="1">3.4.16.4</ecNumber>
        </recommendedName>
        <alternativeName>
            <fullName>DD-transpeptidase</fullName>
        </alternativeName>
    </domain>
</protein>
<comment type="function">
    <text>Cell wall formation.</text>
</comment>
<comment type="catalytic activity">
    <reaction evidence="1">
        <text>[GlcNAc-(1-&gt;4)-Mur2Ac(oyl-L-Ala-gamma-D-Glu-L-Lys-D-Ala-D-Ala)](n)-di-trans,octa-cis-undecaprenyl diphosphate + beta-D-GlcNAc-(1-&gt;4)-Mur2Ac(oyl-L-Ala-gamma-D-Glu-L-Lys-D-Ala-D-Ala)-di-trans,octa-cis-undecaprenyl diphosphate = [GlcNAc-(1-&gt;4)-Mur2Ac(oyl-L-Ala-gamma-D-Glu-L-Lys-D-Ala-D-Ala)](n+1)-di-trans,octa-cis-undecaprenyl diphosphate + di-trans,octa-cis-undecaprenyl diphosphate + H(+)</text>
        <dbReference type="Rhea" id="RHEA:23708"/>
        <dbReference type="Rhea" id="RHEA-COMP:9602"/>
        <dbReference type="Rhea" id="RHEA-COMP:9603"/>
        <dbReference type="ChEBI" id="CHEBI:15378"/>
        <dbReference type="ChEBI" id="CHEBI:58405"/>
        <dbReference type="ChEBI" id="CHEBI:60033"/>
        <dbReference type="ChEBI" id="CHEBI:78435"/>
        <dbReference type="EC" id="2.4.99.28"/>
    </reaction>
</comment>
<comment type="catalytic activity">
    <reaction evidence="1">
        <text>Preferential cleavage: (Ac)2-L-Lys-D-Ala-|-D-Ala. Also transpeptidation of peptidyl-alanyl moieties that are N-acyl substituents of D-alanine.</text>
        <dbReference type="EC" id="3.4.16.4"/>
    </reaction>
</comment>
<comment type="pathway">
    <text>Cell wall biogenesis; peptidoglycan biosynthesis.</text>
</comment>
<comment type="subcellular location">
    <subcellularLocation>
        <location>Secreted</location>
    </subcellularLocation>
</comment>
<comment type="similarity">
    <text evidence="3">In the N-terminal section; belongs to the glycosyltransferase 51 family.</text>
</comment>
<comment type="similarity">
    <text evidence="3">In the C-terminal section; belongs to the transpeptidase family.</text>
</comment>
<proteinExistence type="inferred from homology"/>
<name>PBPA_STROR</name>
<keyword id="KW-0046">Antibiotic resistance</keyword>
<keyword id="KW-0121">Carboxypeptidase</keyword>
<keyword id="KW-0133">Cell shape</keyword>
<keyword id="KW-0961">Cell wall biogenesis/degradation</keyword>
<keyword id="KW-0328">Glycosyltransferase</keyword>
<keyword id="KW-0378">Hydrolase</keyword>
<keyword id="KW-0511">Multifunctional enzyme</keyword>
<keyword id="KW-0573">Peptidoglycan synthesis</keyword>
<keyword id="KW-0645">Protease</keyword>
<keyword id="KW-0964">Secreted</keyword>
<keyword id="KW-0808">Transferase</keyword>
<reference key="1">
    <citation type="journal article" date="1992" name="J. Bacteriol.">
        <title>Nucleotide sequences of genes encoding penicillin-binding proteins from Streptococcus pneumoniae and Streptococcus oralis with high homology to Escherichia coli penicillin-binding proteins 1a and 1b.</title>
        <authorList>
            <person name="Martin C."/>
            <person name="Briese T."/>
            <person name="Hakenbeck R."/>
        </authorList>
    </citation>
    <scope>NUCLEOTIDE SEQUENCE [GENOMIC DNA]</scope>
</reference>
<dbReference type="EC" id="2.4.99.28" evidence="1"/>
<dbReference type="EC" id="3.4.16.4" evidence="1"/>
<dbReference type="EMBL" id="M90528">
    <property type="protein sequence ID" value="AAA26958.1"/>
    <property type="molecule type" value="Genomic_DNA"/>
</dbReference>
<dbReference type="PIR" id="B42893">
    <property type="entry name" value="B42893"/>
</dbReference>
<dbReference type="SMR" id="Q00573"/>
<dbReference type="STRING" id="1303.SORDD17_00136"/>
<dbReference type="CAZy" id="GT51">
    <property type="family name" value="Glycosyltransferase Family 51"/>
</dbReference>
<dbReference type="UniPathway" id="UPA00219"/>
<dbReference type="GO" id="GO:0005576">
    <property type="term" value="C:extracellular region"/>
    <property type="evidence" value="ECO:0007669"/>
    <property type="project" value="UniProtKB-SubCell"/>
</dbReference>
<dbReference type="GO" id="GO:0030288">
    <property type="term" value="C:outer membrane-bounded periplasmic space"/>
    <property type="evidence" value="ECO:0007669"/>
    <property type="project" value="TreeGrafter"/>
</dbReference>
<dbReference type="GO" id="GO:0008658">
    <property type="term" value="F:penicillin binding"/>
    <property type="evidence" value="ECO:0007669"/>
    <property type="project" value="InterPro"/>
</dbReference>
<dbReference type="GO" id="GO:0008955">
    <property type="term" value="F:peptidoglycan glycosyltransferase activity"/>
    <property type="evidence" value="ECO:0007669"/>
    <property type="project" value="RHEA"/>
</dbReference>
<dbReference type="GO" id="GO:0009002">
    <property type="term" value="F:serine-type D-Ala-D-Ala carboxypeptidase activity"/>
    <property type="evidence" value="ECO:0007669"/>
    <property type="project" value="UniProtKB-EC"/>
</dbReference>
<dbReference type="GO" id="GO:0071555">
    <property type="term" value="P:cell wall organization"/>
    <property type="evidence" value="ECO:0007669"/>
    <property type="project" value="UniProtKB-KW"/>
</dbReference>
<dbReference type="GO" id="GO:0009252">
    <property type="term" value="P:peptidoglycan biosynthetic process"/>
    <property type="evidence" value="ECO:0007669"/>
    <property type="project" value="UniProtKB-UniPathway"/>
</dbReference>
<dbReference type="GO" id="GO:0006508">
    <property type="term" value="P:proteolysis"/>
    <property type="evidence" value="ECO:0007669"/>
    <property type="project" value="UniProtKB-KW"/>
</dbReference>
<dbReference type="GO" id="GO:0008360">
    <property type="term" value="P:regulation of cell shape"/>
    <property type="evidence" value="ECO:0007669"/>
    <property type="project" value="UniProtKB-KW"/>
</dbReference>
<dbReference type="GO" id="GO:0046677">
    <property type="term" value="P:response to antibiotic"/>
    <property type="evidence" value="ECO:0007669"/>
    <property type="project" value="UniProtKB-KW"/>
</dbReference>
<dbReference type="FunFam" id="1.10.3810.10:FF:000001">
    <property type="entry name" value="Penicillin-binding protein 1A"/>
    <property type="match status" value="1"/>
</dbReference>
<dbReference type="FunFam" id="3.40.710.10:FF:000020">
    <property type="entry name" value="Penicillin-binding protein 1A"/>
    <property type="match status" value="1"/>
</dbReference>
<dbReference type="Gene3D" id="1.10.3810.10">
    <property type="entry name" value="Biosynthetic peptidoglycan transglycosylase-like"/>
    <property type="match status" value="1"/>
</dbReference>
<dbReference type="Gene3D" id="3.40.710.10">
    <property type="entry name" value="DD-peptidase/beta-lactamase superfamily"/>
    <property type="match status" value="1"/>
</dbReference>
<dbReference type="InterPro" id="IPR012338">
    <property type="entry name" value="Beta-lactam/transpept-like"/>
</dbReference>
<dbReference type="InterPro" id="IPR001264">
    <property type="entry name" value="Glyco_trans_51"/>
</dbReference>
<dbReference type="InterPro" id="IPR050396">
    <property type="entry name" value="Glycosyltr_51/Transpeptidase"/>
</dbReference>
<dbReference type="InterPro" id="IPR023346">
    <property type="entry name" value="Lysozyme-like_dom_sf"/>
</dbReference>
<dbReference type="InterPro" id="IPR036950">
    <property type="entry name" value="PBP_transglycosylase"/>
</dbReference>
<dbReference type="InterPro" id="IPR001460">
    <property type="entry name" value="PCN-bd_Tpept"/>
</dbReference>
<dbReference type="NCBIfam" id="TIGR02074">
    <property type="entry name" value="PBP_1a_fam"/>
    <property type="match status" value="1"/>
</dbReference>
<dbReference type="NCBIfam" id="NF038272">
    <property type="entry name" value="strep_PBP1A"/>
    <property type="match status" value="1"/>
</dbReference>
<dbReference type="PANTHER" id="PTHR32282">
    <property type="entry name" value="BINDING PROTEIN TRANSPEPTIDASE, PUTATIVE-RELATED"/>
    <property type="match status" value="1"/>
</dbReference>
<dbReference type="PANTHER" id="PTHR32282:SF29">
    <property type="entry name" value="PENICILLIN-BINDING PROTEIN 1A"/>
    <property type="match status" value="1"/>
</dbReference>
<dbReference type="Pfam" id="PF00912">
    <property type="entry name" value="Transgly"/>
    <property type="match status" value="1"/>
</dbReference>
<dbReference type="Pfam" id="PF00905">
    <property type="entry name" value="Transpeptidase"/>
    <property type="match status" value="1"/>
</dbReference>
<dbReference type="SUPFAM" id="SSF56601">
    <property type="entry name" value="beta-lactamase/transpeptidase-like"/>
    <property type="match status" value="1"/>
</dbReference>
<dbReference type="SUPFAM" id="SSF53955">
    <property type="entry name" value="Lysozyme-like"/>
    <property type="match status" value="1"/>
</dbReference>
<organism>
    <name type="scientific">Streptococcus oralis</name>
    <dbReference type="NCBI Taxonomy" id="1303"/>
    <lineage>
        <taxon>Bacteria</taxon>
        <taxon>Bacillati</taxon>
        <taxon>Bacillota</taxon>
        <taxon>Bacilli</taxon>
        <taxon>Lactobacillales</taxon>
        <taxon>Streptococcaceae</taxon>
        <taxon>Streptococcus</taxon>
    </lineage>
</organism>